<proteinExistence type="inferred from homology"/>
<accession>C3MRH3</accession>
<protein>
    <recommendedName>
        <fullName evidence="1">tRNA(Ile2) 2-agmatinylcytidine synthetase TiaS</fullName>
        <shortName evidence="1">tRNA(Ile2)-agm2C synthetase</shortName>
        <ecNumber evidence="1">6.3.4.22</ecNumber>
    </recommendedName>
    <alternativeName>
        <fullName evidence="1">tRNA(Ile2) agmatidine synthetase</fullName>
    </alternativeName>
</protein>
<reference key="1">
    <citation type="journal article" date="2009" name="Proc. Natl. Acad. Sci. U.S.A.">
        <title>Biogeography of the Sulfolobus islandicus pan-genome.</title>
        <authorList>
            <person name="Reno M.L."/>
            <person name="Held N.L."/>
            <person name="Fields C.J."/>
            <person name="Burke P.V."/>
            <person name="Whitaker R.J."/>
        </authorList>
    </citation>
    <scope>NUCLEOTIDE SEQUENCE [LARGE SCALE GENOMIC DNA]</scope>
    <source>
        <strain>L.S.2.15 / Lassen #1</strain>
    </source>
</reference>
<evidence type="ECO:0000255" key="1">
    <source>
        <dbReference type="HAMAP-Rule" id="MF_01892"/>
    </source>
</evidence>
<feature type="chain" id="PRO_0000407302" description="tRNA(Ile2) 2-agmatinylcytidine synthetase TiaS">
    <location>
        <begin position="1"/>
        <end position="443"/>
    </location>
</feature>
<gene>
    <name evidence="1" type="primary">tiaS</name>
    <name type="ordered locus">LS215_1991</name>
</gene>
<dbReference type="EC" id="6.3.4.22" evidence="1"/>
<dbReference type="EMBL" id="CP001399">
    <property type="protein sequence ID" value="ACP35986.1"/>
    <property type="molecule type" value="Genomic_DNA"/>
</dbReference>
<dbReference type="RefSeq" id="WP_012714015.1">
    <property type="nucleotide sequence ID" value="NC_012589.1"/>
</dbReference>
<dbReference type="SMR" id="C3MRH3"/>
<dbReference type="GeneID" id="7799639"/>
<dbReference type="KEGG" id="sis:LS215_1991"/>
<dbReference type="HOGENOM" id="CLU_675459_0_0_2"/>
<dbReference type="OrthoDB" id="39189at2157"/>
<dbReference type="Proteomes" id="UP000001747">
    <property type="component" value="Chromosome"/>
</dbReference>
<dbReference type="GO" id="GO:0005737">
    <property type="term" value="C:cytoplasm"/>
    <property type="evidence" value="ECO:0007669"/>
    <property type="project" value="UniProtKB-SubCell"/>
</dbReference>
<dbReference type="GO" id="GO:0005524">
    <property type="term" value="F:ATP binding"/>
    <property type="evidence" value="ECO:0007669"/>
    <property type="project" value="UniProtKB-KW"/>
</dbReference>
<dbReference type="GO" id="GO:0016879">
    <property type="term" value="F:ligase activity, forming carbon-nitrogen bonds"/>
    <property type="evidence" value="ECO:0007669"/>
    <property type="project" value="UniProtKB-UniRule"/>
</dbReference>
<dbReference type="GO" id="GO:0002101">
    <property type="term" value="P:tRNA wobble cytosine modification"/>
    <property type="evidence" value="ECO:0007669"/>
    <property type="project" value="UniProtKB-UniRule"/>
</dbReference>
<dbReference type="Gene3D" id="2.40.50.1010">
    <property type="match status" value="1"/>
</dbReference>
<dbReference type="Gene3D" id="3.30.70.2200">
    <property type="match status" value="1"/>
</dbReference>
<dbReference type="Gene3D" id="3.90.600.20">
    <property type="match status" value="1"/>
</dbReference>
<dbReference type="HAMAP" id="MF_01892">
    <property type="entry name" value="tRNA_Ile2_agm2C_synt"/>
    <property type="match status" value="1"/>
</dbReference>
<dbReference type="InterPro" id="IPR053870">
    <property type="entry name" value="TiaS-like_TCKD"/>
</dbReference>
<dbReference type="InterPro" id="IPR013696">
    <property type="entry name" value="TiaS_FLD"/>
</dbReference>
<dbReference type="InterPro" id="IPR024913">
    <property type="entry name" value="tRNA_Ile2__agm2C_synt"/>
</dbReference>
<dbReference type="InterPro" id="IPR055394">
    <property type="entry name" value="Zn_ribbon_TiaS"/>
</dbReference>
<dbReference type="PANTHER" id="PTHR40705">
    <property type="entry name" value="TRNA(ILE2) 2-AGMATINYLCYTIDINE SYNTHETASE TIAS"/>
    <property type="match status" value="1"/>
</dbReference>
<dbReference type="PANTHER" id="PTHR40705:SF1">
    <property type="entry name" value="TRNA(ILE2) 2-AGMATINYLCYTIDINE SYNTHETASE TIAS"/>
    <property type="match status" value="1"/>
</dbReference>
<dbReference type="Pfam" id="PF08489">
    <property type="entry name" value="TiaS_FLD"/>
    <property type="match status" value="1"/>
</dbReference>
<dbReference type="Pfam" id="PF22641">
    <property type="entry name" value="TiaS_TCKD"/>
    <property type="match status" value="1"/>
</dbReference>
<dbReference type="Pfam" id="PF23783">
    <property type="entry name" value="Zn_ribbon_TiaS"/>
    <property type="match status" value="1"/>
</dbReference>
<comment type="function">
    <text evidence="1">ATP-dependent agmatine transferase that catalyzes the formation of 2-agmatinylcytidine (agm2C) at the wobble position (C34) of tRNA(Ile2), converting the codon specificity from AUG to AUA.</text>
</comment>
<comment type="catalytic activity">
    <reaction evidence="1">
        <text>cytidine(34) in tRNA(Ile2) + agmatine + ATP + H2O = 2-agmatinylcytidine(34) in tRNA(Ile2) + AMP + 2 phosphate + 2 H(+)</text>
        <dbReference type="Rhea" id="RHEA:43608"/>
        <dbReference type="Rhea" id="RHEA-COMP:10625"/>
        <dbReference type="Rhea" id="RHEA-COMP:10626"/>
        <dbReference type="ChEBI" id="CHEBI:15377"/>
        <dbReference type="ChEBI" id="CHEBI:15378"/>
        <dbReference type="ChEBI" id="CHEBI:30616"/>
        <dbReference type="ChEBI" id="CHEBI:43474"/>
        <dbReference type="ChEBI" id="CHEBI:58145"/>
        <dbReference type="ChEBI" id="CHEBI:82748"/>
        <dbReference type="ChEBI" id="CHEBI:83545"/>
        <dbReference type="ChEBI" id="CHEBI:456215"/>
        <dbReference type="EC" id="6.3.4.22"/>
    </reaction>
</comment>
<comment type="subcellular location">
    <subcellularLocation>
        <location evidence="1">Cytoplasm</location>
    </subcellularLocation>
</comment>
<comment type="similarity">
    <text evidence="1">Belongs to the TiaS family.</text>
</comment>
<sequence>MKYLIGIDDHDSYKFGCTTHFSVILTSYLYKNHNTILLDLPYLVRLNPNIPWKTRGNASIKLIVDFNGTKKELADIIFSYSVKYVKNVSLALEHGRRPGIAIIEYDKYKSLFEKLYDFYIKGILDIIPIDYAKKFAEKNDIEIRGDRGIIGSIAALGMSGDYTYELITYRKKENWLKKRMINEDSVKRVDEETFPLTFANYDYINDSPLITPHGNDPILYGIRGTSIEHLIKAMELIESNEDINFFAVFKTNQNTDIHFQKVGNRFYQEIKKVIQIKNIKILEGGDVMIRTTDDDILFVYKETGELNSAAKLLKEGDEIVAYGAIKPSITYGKIIELERFEILKLNDLQLINPKCPICGGPTKSLGKNKGYKCKKCKYIINTANKSMKNIIRNLSLGIYQTRAYRHLTRPIFLTLENNNQSFHEERKFLDMYRSELYKLDYHL</sequence>
<name>TIAS_SACI2</name>
<keyword id="KW-0067">ATP-binding</keyword>
<keyword id="KW-0963">Cytoplasm</keyword>
<keyword id="KW-0436">Ligase</keyword>
<keyword id="KW-0547">Nucleotide-binding</keyword>
<keyword id="KW-0819">tRNA processing</keyword>
<organism>
    <name type="scientific">Saccharolobus islandicus (strain L.S.2.15 / Lassen #1)</name>
    <name type="common">Sulfolobus islandicus</name>
    <dbReference type="NCBI Taxonomy" id="429572"/>
    <lineage>
        <taxon>Archaea</taxon>
        <taxon>Thermoproteota</taxon>
        <taxon>Thermoprotei</taxon>
        <taxon>Sulfolobales</taxon>
        <taxon>Sulfolobaceae</taxon>
        <taxon>Saccharolobus</taxon>
    </lineage>
</organism>